<dbReference type="EC" id="1.1.1.267" evidence="1"/>
<dbReference type="EMBL" id="AE005174">
    <property type="protein sequence ID" value="AAG54475.1"/>
    <property type="molecule type" value="Genomic_DNA"/>
</dbReference>
<dbReference type="EMBL" id="BA000007">
    <property type="protein sequence ID" value="BAB33598.1"/>
    <property type="molecule type" value="Genomic_DNA"/>
</dbReference>
<dbReference type="PIR" id="G85501">
    <property type="entry name" value="G85501"/>
</dbReference>
<dbReference type="PIR" id="G90650">
    <property type="entry name" value="G90650"/>
</dbReference>
<dbReference type="RefSeq" id="NP_308202.1">
    <property type="nucleotide sequence ID" value="NC_002695.1"/>
</dbReference>
<dbReference type="SMR" id="Q8X8Y1"/>
<dbReference type="STRING" id="155864.Z0184"/>
<dbReference type="GeneID" id="913875"/>
<dbReference type="KEGG" id="ece:Z0184"/>
<dbReference type="KEGG" id="ecs:ECs_0175"/>
<dbReference type="PATRIC" id="fig|386585.9.peg.277"/>
<dbReference type="eggNOG" id="COG0743">
    <property type="taxonomic scope" value="Bacteria"/>
</dbReference>
<dbReference type="HOGENOM" id="CLU_035714_4_0_6"/>
<dbReference type="OMA" id="AHPNWVM"/>
<dbReference type="BRENDA" id="1.1.1.267">
    <property type="organism ID" value="2026"/>
</dbReference>
<dbReference type="UniPathway" id="UPA00056">
    <property type="reaction ID" value="UER00092"/>
</dbReference>
<dbReference type="Proteomes" id="UP000000558">
    <property type="component" value="Chromosome"/>
</dbReference>
<dbReference type="Proteomes" id="UP000002519">
    <property type="component" value="Chromosome"/>
</dbReference>
<dbReference type="GO" id="GO:0030604">
    <property type="term" value="F:1-deoxy-D-xylulose-5-phosphate reductoisomerase activity"/>
    <property type="evidence" value="ECO:0007669"/>
    <property type="project" value="UniProtKB-UniRule"/>
</dbReference>
<dbReference type="GO" id="GO:0030145">
    <property type="term" value="F:manganese ion binding"/>
    <property type="evidence" value="ECO:0007669"/>
    <property type="project" value="TreeGrafter"/>
</dbReference>
<dbReference type="GO" id="GO:0070402">
    <property type="term" value="F:NADPH binding"/>
    <property type="evidence" value="ECO:0007669"/>
    <property type="project" value="InterPro"/>
</dbReference>
<dbReference type="GO" id="GO:0051484">
    <property type="term" value="P:isopentenyl diphosphate biosynthetic process, methylerythritol 4-phosphate pathway involved in terpenoid biosynthetic process"/>
    <property type="evidence" value="ECO:0007669"/>
    <property type="project" value="TreeGrafter"/>
</dbReference>
<dbReference type="FunFam" id="1.10.1740.10:FF:000004">
    <property type="entry name" value="1-deoxy-D-xylulose 5-phosphate reductoisomerase"/>
    <property type="match status" value="1"/>
</dbReference>
<dbReference type="FunFam" id="3.40.50.720:FF:000045">
    <property type="entry name" value="1-deoxy-D-xylulose 5-phosphate reductoisomerase"/>
    <property type="match status" value="1"/>
</dbReference>
<dbReference type="Gene3D" id="1.10.1740.10">
    <property type="match status" value="1"/>
</dbReference>
<dbReference type="Gene3D" id="3.40.50.720">
    <property type="entry name" value="NAD(P)-binding Rossmann-like Domain"/>
    <property type="match status" value="1"/>
</dbReference>
<dbReference type="HAMAP" id="MF_00183">
    <property type="entry name" value="DXP_reductoisom"/>
    <property type="match status" value="1"/>
</dbReference>
<dbReference type="InterPro" id="IPR003821">
    <property type="entry name" value="DXP_reductoisomerase"/>
</dbReference>
<dbReference type="InterPro" id="IPR013644">
    <property type="entry name" value="DXP_reductoisomerase_C"/>
</dbReference>
<dbReference type="InterPro" id="IPR013512">
    <property type="entry name" value="DXP_reductoisomerase_N"/>
</dbReference>
<dbReference type="InterPro" id="IPR026877">
    <property type="entry name" value="DXPR_C"/>
</dbReference>
<dbReference type="InterPro" id="IPR036169">
    <property type="entry name" value="DXPR_C_sf"/>
</dbReference>
<dbReference type="InterPro" id="IPR036291">
    <property type="entry name" value="NAD(P)-bd_dom_sf"/>
</dbReference>
<dbReference type="NCBIfam" id="TIGR00243">
    <property type="entry name" value="Dxr"/>
    <property type="match status" value="1"/>
</dbReference>
<dbReference type="NCBIfam" id="NF003938">
    <property type="entry name" value="PRK05447.1-1"/>
    <property type="match status" value="1"/>
</dbReference>
<dbReference type="NCBIfam" id="NF009114">
    <property type="entry name" value="PRK12464.1"/>
    <property type="match status" value="1"/>
</dbReference>
<dbReference type="PANTHER" id="PTHR30525">
    <property type="entry name" value="1-DEOXY-D-XYLULOSE 5-PHOSPHATE REDUCTOISOMERASE"/>
    <property type="match status" value="1"/>
</dbReference>
<dbReference type="PANTHER" id="PTHR30525:SF0">
    <property type="entry name" value="1-DEOXY-D-XYLULOSE 5-PHOSPHATE REDUCTOISOMERASE, CHLOROPLASTIC"/>
    <property type="match status" value="1"/>
</dbReference>
<dbReference type="Pfam" id="PF08436">
    <property type="entry name" value="DXP_redisom_C"/>
    <property type="match status" value="1"/>
</dbReference>
<dbReference type="Pfam" id="PF02670">
    <property type="entry name" value="DXP_reductoisom"/>
    <property type="match status" value="1"/>
</dbReference>
<dbReference type="Pfam" id="PF13288">
    <property type="entry name" value="DXPR_C"/>
    <property type="match status" value="1"/>
</dbReference>
<dbReference type="PIRSF" id="PIRSF006205">
    <property type="entry name" value="Dxp_reductismrs"/>
    <property type="match status" value="1"/>
</dbReference>
<dbReference type="SUPFAM" id="SSF69055">
    <property type="entry name" value="1-deoxy-D-xylulose-5-phosphate reductoisomerase, C-terminal domain"/>
    <property type="match status" value="1"/>
</dbReference>
<dbReference type="SUPFAM" id="SSF55347">
    <property type="entry name" value="Glyceraldehyde-3-phosphate dehydrogenase-like, C-terminal domain"/>
    <property type="match status" value="1"/>
</dbReference>
<dbReference type="SUPFAM" id="SSF51735">
    <property type="entry name" value="NAD(P)-binding Rossmann-fold domains"/>
    <property type="match status" value="1"/>
</dbReference>
<reference key="1">
    <citation type="journal article" date="2001" name="Nature">
        <title>Genome sequence of enterohaemorrhagic Escherichia coli O157:H7.</title>
        <authorList>
            <person name="Perna N.T."/>
            <person name="Plunkett G. III"/>
            <person name="Burland V."/>
            <person name="Mau B."/>
            <person name="Glasner J.D."/>
            <person name="Rose D.J."/>
            <person name="Mayhew G.F."/>
            <person name="Evans P.S."/>
            <person name="Gregor J."/>
            <person name="Kirkpatrick H.A."/>
            <person name="Posfai G."/>
            <person name="Hackett J."/>
            <person name="Klink S."/>
            <person name="Boutin A."/>
            <person name="Shao Y."/>
            <person name="Miller L."/>
            <person name="Grotbeck E.J."/>
            <person name="Davis N.W."/>
            <person name="Lim A."/>
            <person name="Dimalanta E.T."/>
            <person name="Potamousis K."/>
            <person name="Apodaca J."/>
            <person name="Anantharaman T.S."/>
            <person name="Lin J."/>
            <person name="Yen G."/>
            <person name="Schwartz D.C."/>
            <person name="Welch R.A."/>
            <person name="Blattner F.R."/>
        </authorList>
    </citation>
    <scope>NUCLEOTIDE SEQUENCE [LARGE SCALE GENOMIC DNA]</scope>
    <source>
        <strain>O157:H7 / EDL933 / ATCC 700927 / EHEC</strain>
    </source>
</reference>
<reference key="2">
    <citation type="journal article" date="2001" name="DNA Res.">
        <title>Complete genome sequence of enterohemorrhagic Escherichia coli O157:H7 and genomic comparison with a laboratory strain K-12.</title>
        <authorList>
            <person name="Hayashi T."/>
            <person name="Makino K."/>
            <person name="Ohnishi M."/>
            <person name="Kurokawa K."/>
            <person name="Ishii K."/>
            <person name="Yokoyama K."/>
            <person name="Han C.-G."/>
            <person name="Ohtsubo E."/>
            <person name="Nakayama K."/>
            <person name="Murata T."/>
            <person name="Tanaka M."/>
            <person name="Tobe T."/>
            <person name="Iida T."/>
            <person name="Takami H."/>
            <person name="Honda T."/>
            <person name="Sasakawa C."/>
            <person name="Ogasawara N."/>
            <person name="Yasunaga T."/>
            <person name="Kuhara S."/>
            <person name="Shiba T."/>
            <person name="Hattori M."/>
            <person name="Shinagawa H."/>
        </authorList>
    </citation>
    <scope>NUCLEOTIDE SEQUENCE [LARGE SCALE GENOMIC DNA]</scope>
    <source>
        <strain>O157:H7 / Sakai / RIMD 0509952 / EHEC</strain>
    </source>
</reference>
<evidence type="ECO:0000255" key="1">
    <source>
        <dbReference type="HAMAP-Rule" id="MF_00183"/>
    </source>
</evidence>
<name>DXR_ECO57</name>
<proteinExistence type="inferred from homology"/>
<feature type="chain" id="PRO_0000163652" description="1-deoxy-D-xylulose 5-phosphate reductoisomerase">
    <location>
        <begin position="1"/>
        <end position="398"/>
    </location>
</feature>
<feature type="binding site" evidence="1">
    <location>
        <position position="10"/>
    </location>
    <ligand>
        <name>NADPH</name>
        <dbReference type="ChEBI" id="CHEBI:57783"/>
    </ligand>
</feature>
<feature type="binding site" evidence="1">
    <location>
        <position position="11"/>
    </location>
    <ligand>
        <name>NADPH</name>
        <dbReference type="ChEBI" id="CHEBI:57783"/>
    </ligand>
</feature>
<feature type="binding site" evidence="1">
    <location>
        <position position="12"/>
    </location>
    <ligand>
        <name>NADPH</name>
        <dbReference type="ChEBI" id="CHEBI:57783"/>
    </ligand>
</feature>
<feature type="binding site" evidence="1">
    <location>
        <position position="13"/>
    </location>
    <ligand>
        <name>NADPH</name>
        <dbReference type="ChEBI" id="CHEBI:57783"/>
    </ligand>
</feature>
<feature type="binding site" evidence="1">
    <location>
        <position position="36"/>
    </location>
    <ligand>
        <name>NADPH</name>
        <dbReference type="ChEBI" id="CHEBI:57783"/>
    </ligand>
</feature>
<feature type="binding site" evidence="1">
    <location>
        <position position="37"/>
    </location>
    <ligand>
        <name>NADPH</name>
        <dbReference type="ChEBI" id="CHEBI:57783"/>
    </ligand>
</feature>
<feature type="binding site" evidence="1">
    <location>
        <position position="38"/>
    </location>
    <ligand>
        <name>NADPH</name>
        <dbReference type="ChEBI" id="CHEBI:57783"/>
    </ligand>
</feature>
<feature type="binding site" evidence="1">
    <location>
        <position position="124"/>
    </location>
    <ligand>
        <name>NADPH</name>
        <dbReference type="ChEBI" id="CHEBI:57783"/>
    </ligand>
</feature>
<feature type="binding site" evidence="1">
    <location>
        <position position="125"/>
    </location>
    <ligand>
        <name>1-deoxy-D-xylulose 5-phosphate</name>
        <dbReference type="ChEBI" id="CHEBI:57792"/>
    </ligand>
</feature>
<feature type="binding site" evidence="1">
    <location>
        <position position="126"/>
    </location>
    <ligand>
        <name>NADPH</name>
        <dbReference type="ChEBI" id="CHEBI:57783"/>
    </ligand>
</feature>
<feature type="binding site" evidence="1">
    <location>
        <position position="150"/>
    </location>
    <ligand>
        <name>Mn(2+)</name>
        <dbReference type="ChEBI" id="CHEBI:29035"/>
    </ligand>
</feature>
<feature type="binding site" evidence="1">
    <location>
        <position position="151"/>
    </location>
    <ligand>
        <name>1-deoxy-D-xylulose 5-phosphate</name>
        <dbReference type="ChEBI" id="CHEBI:57792"/>
    </ligand>
</feature>
<feature type="binding site" evidence="1">
    <location>
        <position position="152"/>
    </location>
    <ligand>
        <name>1-deoxy-D-xylulose 5-phosphate</name>
        <dbReference type="ChEBI" id="CHEBI:57792"/>
    </ligand>
</feature>
<feature type="binding site" evidence="1">
    <location>
        <position position="152"/>
    </location>
    <ligand>
        <name>Mn(2+)</name>
        <dbReference type="ChEBI" id="CHEBI:29035"/>
    </ligand>
</feature>
<feature type="binding site" evidence="1">
    <location>
        <position position="186"/>
    </location>
    <ligand>
        <name>1-deoxy-D-xylulose 5-phosphate</name>
        <dbReference type="ChEBI" id="CHEBI:57792"/>
    </ligand>
</feature>
<feature type="binding site" evidence="1">
    <location>
        <position position="209"/>
    </location>
    <ligand>
        <name>1-deoxy-D-xylulose 5-phosphate</name>
        <dbReference type="ChEBI" id="CHEBI:57792"/>
    </ligand>
</feature>
<feature type="binding site" evidence="1">
    <location>
        <position position="215"/>
    </location>
    <ligand>
        <name>NADPH</name>
        <dbReference type="ChEBI" id="CHEBI:57783"/>
    </ligand>
</feature>
<feature type="binding site" evidence="1">
    <location>
        <position position="222"/>
    </location>
    <ligand>
        <name>1-deoxy-D-xylulose 5-phosphate</name>
        <dbReference type="ChEBI" id="CHEBI:57792"/>
    </ligand>
</feature>
<feature type="binding site" evidence="1">
    <location>
        <position position="227"/>
    </location>
    <ligand>
        <name>1-deoxy-D-xylulose 5-phosphate</name>
        <dbReference type="ChEBI" id="CHEBI:57792"/>
    </ligand>
</feature>
<feature type="binding site" evidence="1">
    <location>
        <position position="228"/>
    </location>
    <ligand>
        <name>1-deoxy-D-xylulose 5-phosphate</name>
        <dbReference type="ChEBI" id="CHEBI:57792"/>
    </ligand>
</feature>
<feature type="binding site" evidence="1">
    <location>
        <position position="231"/>
    </location>
    <ligand>
        <name>1-deoxy-D-xylulose 5-phosphate</name>
        <dbReference type="ChEBI" id="CHEBI:57792"/>
    </ligand>
</feature>
<feature type="binding site" evidence="1">
    <location>
        <position position="231"/>
    </location>
    <ligand>
        <name>Mn(2+)</name>
        <dbReference type="ChEBI" id="CHEBI:29035"/>
    </ligand>
</feature>
<sequence>MKQLTILGSTGSIGCSTLDVVRHNPEHFRVVALVAGKNVTRMVEQCLEFSPRYAVMDDEASAKLLKTMLQQQGSRTEVLSGQQAACDMAALEDVDQVMAAIVGAAGLLPTLAAIRAGKTILLANKESLVTCGRLFMDAVKQSKAQLLPVDSEHNAIFQSLPQPIQHNLGYADLEQNGVVSILLTGSGGPFRETPLRDLATMTPDQACRHPNWSMGRKISVDSATMMNKGLEYIEARWLFNASASQMEVLIHPQSVIHSMVRYQDGSVLAQLGEPDMRTPIAHTMAWPNRVNSGVKPLDFCKLSALTFAAPDYDRYPCLKLAMEAFEQGQAATTALNAANEITVAAFLAQQIRFTDIAALNLSVLEKMDMREPQCVDDVLSVDASAREVARKEVMRLAS</sequence>
<comment type="function">
    <text evidence="1">Catalyzes the NADPH-dependent rearrangement and reduction of 1-deoxy-D-xylulose-5-phosphate (DXP) to 2-C-methyl-D-erythritol 4-phosphate (MEP).</text>
</comment>
<comment type="catalytic activity">
    <reaction evidence="1">
        <text>2-C-methyl-D-erythritol 4-phosphate + NADP(+) = 1-deoxy-D-xylulose 5-phosphate + NADPH + H(+)</text>
        <dbReference type="Rhea" id="RHEA:13717"/>
        <dbReference type="ChEBI" id="CHEBI:15378"/>
        <dbReference type="ChEBI" id="CHEBI:57783"/>
        <dbReference type="ChEBI" id="CHEBI:57792"/>
        <dbReference type="ChEBI" id="CHEBI:58262"/>
        <dbReference type="ChEBI" id="CHEBI:58349"/>
        <dbReference type="EC" id="1.1.1.267"/>
    </reaction>
    <physiologicalReaction direction="right-to-left" evidence="1">
        <dbReference type="Rhea" id="RHEA:13719"/>
    </physiologicalReaction>
</comment>
<comment type="cofactor">
    <cofactor evidence="1">
        <name>Mg(2+)</name>
        <dbReference type="ChEBI" id="CHEBI:18420"/>
    </cofactor>
    <cofactor evidence="1">
        <name>Mn(2+)</name>
        <dbReference type="ChEBI" id="CHEBI:29035"/>
    </cofactor>
</comment>
<comment type="pathway">
    <text evidence="1">Isoprenoid biosynthesis; isopentenyl diphosphate biosynthesis via DXP pathway; isopentenyl diphosphate from 1-deoxy-D-xylulose 5-phosphate: step 1/6.</text>
</comment>
<comment type="subunit">
    <text evidence="1">Homodimer.</text>
</comment>
<comment type="similarity">
    <text evidence="1">Belongs to the DXR family.</text>
</comment>
<keyword id="KW-0414">Isoprene biosynthesis</keyword>
<keyword id="KW-0464">Manganese</keyword>
<keyword id="KW-0479">Metal-binding</keyword>
<keyword id="KW-0521">NADP</keyword>
<keyword id="KW-0560">Oxidoreductase</keyword>
<keyword id="KW-1185">Reference proteome</keyword>
<gene>
    <name evidence="1" type="primary">dxr</name>
    <name type="ordered locus">Z0184</name>
    <name type="ordered locus">ECs0175</name>
</gene>
<organism>
    <name type="scientific">Escherichia coli O157:H7</name>
    <dbReference type="NCBI Taxonomy" id="83334"/>
    <lineage>
        <taxon>Bacteria</taxon>
        <taxon>Pseudomonadati</taxon>
        <taxon>Pseudomonadota</taxon>
        <taxon>Gammaproteobacteria</taxon>
        <taxon>Enterobacterales</taxon>
        <taxon>Enterobacteriaceae</taxon>
        <taxon>Escherichia</taxon>
    </lineage>
</organism>
<accession>Q8X8Y1</accession>
<protein>
    <recommendedName>
        <fullName evidence="1">1-deoxy-D-xylulose 5-phosphate reductoisomerase</fullName>
        <shortName evidence="1">DXP reductoisomerase</shortName>
        <ecNumber evidence="1">1.1.1.267</ecNumber>
    </recommendedName>
    <alternativeName>
        <fullName evidence="1">1-deoxyxylulose-5-phosphate reductoisomerase</fullName>
    </alternativeName>
    <alternativeName>
        <fullName evidence="1">2-C-methyl-D-erythritol 4-phosphate synthase</fullName>
    </alternativeName>
</protein>